<name>HIS2_SYNY3</name>
<accession>P74755</accession>
<feature type="chain" id="PRO_0000136440" description="Histidine biosynthesis bifunctional protein HisIE">
    <location>
        <begin position="1"/>
        <end position="215"/>
    </location>
</feature>
<feature type="region of interest" description="Phosphoribosyl-AMP cyclohydrolase">
    <location>
        <begin position="1"/>
        <end position="126"/>
    </location>
</feature>
<feature type="region of interest" description="Phosphoribosyl-ATP pyrophosphohydrolase">
    <location>
        <begin position="127"/>
        <end position="215"/>
    </location>
</feature>
<organism>
    <name type="scientific">Synechocystis sp. (strain ATCC 27184 / PCC 6803 / Kazusa)</name>
    <dbReference type="NCBI Taxonomy" id="1111708"/>
    <lineage>
        <taxon>Bacteria</taxon>
        <taxon>Bacillati</taxon>
        <taxon>Cyanobacteriota</taxon>
        <taxon>Cyanophyceae</taxon>
        <taxon>Synechococcales</taxon>
        <taxon>Merismopediaceae</taxon>
        <taxon>Synechocystis</taxon>
    </lineage>
</organism>
<evidence type="ECO:0000250" key="1"/>
<evidence type="ECO:0000305" key="2"/>
<dbReference type="EC" id="3.5.4.19"/>
<dbReference type="EC" id="3.6.1.31"/>
<dbReference type="EMBL" id="BA000022">
    <property type="protein sequence ID" value="BAA18875.1"/>
    <property type="status" value="ALT_INIT"/>
    <property type="molecule type" value="Genomic_DNA"/>
</dbReference>
<dbReference type="PIR" id="S76963">
    <property type="entry name" value="S76963"/>
</dbReference>
<dbReference type="SMR" id="P74755"/>
<dbReference type="FunCoup" id="P74755">
    <property type="interactions" value="172"/>
</dbReference>
<dbReference type="STRING" id="1148.gene:10500647"/>
<dbReference type="PaxDb" id="1148-1653965"/>
<dbReference type="EnsemblBacteria" id="BAA18875">
    <property type="protein sequence ID" value="BAA18875"/>
    <property type="gene ID" value="BAA18875"/>
</dbReference>
<dbReference type="KEGG" id="syn:slr0608"/>
<dbReference type="eggNOG" id="COG0139">
    <property type="taxonomic scope" value="Bacteria"/>
</dbReference>
<dbReference type="eggNOG" id="COG0140">
    <property type="taxonomic scope" value="Bacteria"/>
</dbReference>
<dbReference type="InParanoid" id="P74755"/>
<dbReference type="PhylomeDB" id="P74755"/>
<dbReference type="UniPathway" id="UPA00031">
    <property type="reaction ID" value="UER00007"/>
</dbReference>
<dbReference type="UniPathway" id="UPA00031">
    <property type="reaction ID" value="UER00008"/>
</dbReference>
<dbReference type="Proteomes" id="UP000001425">
    <property type="component" value="Chromosome"/>
</dbReference>
<dbReference type="GO" id="GO:0005737">
    <property type="term" value="C:cytoplasm"/>
    <property type="evidence" value="ECO:0007669"/>
    <property type="project" value="UniProtKB-SubCell"/>
</dbReference>
<dbReference type="GO" id="GO:0005524">
    <property type="term" value="F:ATP binding"/>
    <property type="evidence" value="ECO:0007669"/>
    <property type="project" value="UniProtKB-KW"/>
</dbReference>
<dbReference type="GO" id="GO:0004635">
    <property type="term" value="F:phosphoribosyl-AMP cyclohydrolase activity"/>
    <property type="evidence" value="ECO:0007669"/>
    <property type="project" value="UniProtKB-UniRule"/>
</dbReference>
<dbReference type="GO" id="GO:0004636">
    <property type="term" value="F:phosphoribosyl-ATP diphosphatase activity"/>
    <property type="evidence" value="ECO:0007669"/>
    <property type="project" value="UniProtKB-UniRule"/>
</dbReference>
<dbReference type="GO" id="GO:0000105">
    <property type="term" value="P:L-histidine biosynthetic process"/>
    <property type="evidence" value="ECO:0007669"/>
    <property type="project" value="UniProtKB-UniRule"/>
</dbReference>
<dbReference type="CDD" id="cd11534">
    <property type="entry name" value="NTP-PPase_HisIE_like"/>
    <property type="match status" value="1"/>
</dbReference>
<dbReference type="FunFam" id="3.10.20.810:FF:000001">
    <property type="entry name" value="Histidine biosynthesis bifunctional protein HisIE"/>
    <property type="match status" value="1"/>
</dbReference>
<dbReference type="Gene3D" id="1.10.287.1080">
    <property type="entry name" value="MazG-like"/>
    <property type="match status" value="1"/>
</dbReference>
<dbReference type="Gene3D" id="3.10.20.810">
    <property type="entry name" value="Phosphoribosyl-AMP cyclohydrolase"/>
    <property type="match status" value="1"/>
</dbReference>
<dbReference type="HAMAP" id="MF_01020">
    <property type="entry name" value="HisE"/>
    <property type="match status" value="1"/>
</dbReference>
<dbReference type="HAMAP" id="MF_01021">
    <property type="entry name" value="HisI"/>
    <property type="match status" value="1"/>
</dbReference>
<dbReference type="HAMAP" id="MF_01019">
    <property type="entry name" value="HisIE"/>
    <property type="match status" value="1"/>
</dbReference>
<dbReference type="InterPro" id="IPR023019">
    <property type="entry name" value="His_synth_HisIE"/>
</dbReference>
<dbReference type="InterPro" id="IPR008179">
    <property type="entry name" value="HisE"/>
</dbReference>
<dbReference type="InterPro" id="IPR026660">
    <property type="entry name" value="PRA-CH"/>
</dbReference>
<dbReference type="InterPro" id="IPR021130">
    <property type="entry name" value="PRib-ATP_PPHydrolase-like"/>
</dbReference>
<dbReference type="InterPro" id="IPR002496">
    <property type="entry name" value="PRib_AMP_CycHydrolase_dom"/>
</dbReference>
<dbReference type="InterPro" id="IPR038019">
    <property type="entry name" value="PRib_AMP_CycHydrolase_sf"/>
</dbReference>
<dbReference type="NCBIfam" id="TIGR03188">
    <property type="entry name" value="histidine_hisI"/>
    <property type="match status" value="1"/>
</dbReference>
<dbReference type="NCBIfam" id="NF000768">
    <property type="entry name" value="PRK00051.1"/>
    <property type="match status" value="1"/>
</dbReference>
<dbReference type="NCBIfam" id="NF002747">
    <property type="entry name" value="PRK02759.1"/>
    <property type="match status" value="1"/>
</dbReference>
<dbReference type="PANTHER" id="PTHR42945">
    <property type="entry name" value="HISTIDINE BIOSYNTHESIS BIFUNCTIONAL PROTEIN"/>
    <property type="match status" value="1"/>
</dbReference>
<dbReference type="PANTHER" id="PTHR42945:SF1">
    <property type="entry name" value="HISTIDINE BIOSYNTHESIS BIFUNCTIONAL PROTEIN HIS7"/>
    <property type="match status" value="1"/>
</dbReference>
<dbReference type="Pfam" id="PF01502">
    <property type="entry name" value="PRA-CH"/>
    <property type="match status" value="1"/>
</dbReference>
<dbReference type="Pfam" id="PF01503">
    <property type="entry name" value="PRA-PH"/>
    <property type="match status" value="1"/>
</dbReference>
<dbReference type="SUPFAM" id="SSF101386">
    <property type="entry name" value="all-alpha NTP pyrophosphatases"/>
    <property type="match status" value="1"/>
</dbReference>
<dbReference type="SUPFAM" id="SSF141734">
    <property type="entry name" value="HisI-like"/>
    <property type="match status" value="1"/>
</dbReference>
<reference key="1">
    <citation type="journal article" date="1996" name="DNA Res.">
        <title>Sequence analysis of the genome of the unicellular cyanobacterium Synechocystis sp. strain PCC6803. II. Sequence determination of the entire genome and assignment of potential protein-coding regions.</title>
        <authorList>
            <person name="Kaneko T."/>
            <person name="Sato S."/>
            <person name="Kotani H."/>
            <person name="Tanaka A."/>
            <person name="Asamizu E."/>
            <person name="Nakamura Y."/>
            <person name="Miyajima N."/>
            <person name="Hirosawa M."/>
            <person name="Sugiura M."/>
            <person name="Sasamoto S."/>
            <person name="Kimura T."/>
            <person name="Hosouchi T."/>
            <person name="Matsuno A."/>
            <person name="Muraki A."/>
            <person name="Nakazaki N."/>
            <person name="Naruo K."/>
            <person name="Okumura S."/>
            <person name="Shimpo S."/>
            <person name="Takeuchi C."/>
            <person name="Wada T."/>
            <person name="Watanabe A."/>
            <person name="Yamada M."/>
            <person name="Yasuda M."/>
            <person name="Tabata S."/>
        </authorList>
    </citation>
    <scope>NUCLEOTIDE SEQUENCE [LARGE SCALE GENOMIC DNA]</scope>
    <source>
        <strain>ATCC 27184 / PCC 6803 / Kazusa</strain>
    </source>
</reference>
<gene>
    <name type="primary">hisI</name>
    <name type="synonym">hisIE</name>
    <name type="ordered locus">slr0608</name>
</gene>
<keyword id="KW-0028">Amino-acid biosynthesis</keyword>
<keyword id="KW-0067">ATP-binding</keyword>
<keyword id="KW-0963">Cytoplasm</keyword>
<keyword id="KW-0368">Histidine biosynthesis</keyword>
<keyword id="KW-0378">Hydrolase</keyword>
<keyword id="KW-0511">Multifunctional enzyme</keyword>
<keyword id="KW-0547">Nucleotide-binding</keyword>
<keyword id="KW-1185">Reference proteome</keyword>
<protein>
    <recommendedName>
        <fullName>Histidine biosynthesis bifunctional protein HisIE</fullName>
    </recommendedName>
    <domain>
        <recommendedName>
            <fullName>Phosphoribosyl-AMP cyclohydrolase</fullName>
            <shortName>PRA-CH</shortName>
            <ecNumber>3.5.4.19</ecNumber>
        </recommendedName>
    </domain>
    <domain>
        <recommendedName>
            <fullName>Phosphoribosyl-ATP pyrophosphatase</fullName>
            <shortName>PRA-PH</shortName>
            <ecNumber>3.6.1.31</ecNumber>
        </recommendedName>
    </domain>
</protein>
<comment type="catalytic activity">
    <reaction>
        <text>1-(5-phospho-beta-D-ribosyl)-ATP + H2O = 1-(5-phospho-beta-D-ribosyl)-5'-AMP + diphosphate + H(+)</text>
        <dbReference type="Rhea" id="RHEA:22828"/>
        <dbReference type="ChEBI" id="CHEBI:15377"/>
        <dbReference type="ChEBI" id="CHEBI:15378"/>
        <dbReference type="ChEBI" id="CHEBI:33019"/>
        <dbReference type="ChEBI" id="CHEBI:59457"/>
        <dbReference type="ChEBI" id="CHEBI:73183"/>
        <dbReference type="EC" id="3.6.1.31"/>
    </reaction>
</comment>
<comment type="catalytic activity">
    <reaction>
        <text>1-(5-phospho-beta-D-ribosyl)-5'-AMP + H2O = 1-(5-phospho-beta-D-ribosyl)-5-[(5-phospho-beta-D-ribosylamino)methylideneamino]imidazole-4-carboxamide</text>
        <dbReference type="Rhea" id="RHEA:20049"/>
        <dbReference type="ChEBI" id="CHEBI:15377"/>
        <dbReference type="ChEBI" id="CHEBI:58435"/>
        <dbReference type="ChEBI" id="CHEBI:59457"/>
        <dbReference type="EC" id="3.5.4.19"/>
    </reaction>
</comment>
<comment type="pathway">
    <text>Amino-acid biosynthesis; L-histidine biosynthesis; L-histidine from 5-phospho-alpha-D-ribose 1-diphosphate: step 2/9.</text>
</comment>
<comment type="pathway">
    <text>Amino-acid biosynthesis; L-histidine biosynthesis; L-histidine from 5-phospho-alpha-D-ribose 1-diphosphate: step 3/9.</text>
</comment>
<comment type="subcellular location">
    <subcellularLocation>
        <location evidence="1">Cytoplasm</location>
    </subcellularLocation>
</comment>
<comment type="similarity">
    <text evidence="2">In the N-terminal section; belongs to the PRA-CH family.</text>
</comment>
<comment type="similarity">
    <text evidence="2">In the C-terminal section; belongs to the PRA-PH family.</text>
</comment>
<comment type="sequence caution" evidence="2">
    <conflict type="erroneous initiation">
        <sequence resource="EMBL-CDS" id="BAA18875"/>
    </conflict>
</comment>
<sequence>MSHSDLPLANAVPLDKIRYNDQGLVPAIAQDYLDGTVLMLAWMNEAALAKTLATGQVWYWSRSRQELWHKGATSGHFQKLLGIRYDCDSDALLLTIEQKGDIACHTGERSCFHQLDGHKSPPPADMLTELARVIGDRRDHPTPESYTCKLLAGGDNKILKKIGEESAEVVMACKDDDPEAIAGEVADLFYHTLVALAHHNVDLRAVYRKLGDRRR</sequence>
<proteinExistence type="inferred from homology"/>